<protein>
    <recommendedName>
        <fullName evidence="1">Bis(5'-nucleosyl)-tetraphosphatase, symmetrical</fullName>
        <ecNumber evidence="1">3.6.1.41</ecNumber>
    </recommendedName>
    <alternativeName>
        <fullName evidence="1">Ap4A hydrolase</fullName>
    </alternativeName>
    <alternativeName>
        <fullName evidence="1">Diadenosine 5',5'''-P1,P4-tetraphosphate pyrophosphohydrolase</fullName>
    </alternativeName>
    <alternativeName>
        <fullName evidence="1">Diadenosine tetraphosphatase</fullName>
    </alternativeName>
</protein>
<organism>
    <name type="scientific">Edwardsiella ictaluri (strain 93-146)</name>
    <dbReference type="NCBI Taxonomy" id="634503"/>
    <lineage>
        <taxon>Bacteria</taxon>
        <taxon>Pseudomonadati</taxon>
        <taxon>Pseudomonadota</taxon>
        <taxon>Gammaproteobacteria</taxon>
        <taxon>Enterobacterales</taxon>
        <taxon>Hafniaceae</taxon>
        <taxon>Edwardsiella</taxon>
    </lineage>
</organism>
<reference key="1">
    <citation type="submission" date="2009-03" db="EMBL/GenBank/DDBJ databases">
        <title>Complete genome sequence of Edwardsiella ictaluri 93-146.</title>
        <authorList>
            <person name="Williams M.L."/>
            <person name="Gillaspy A.F."/>
            <person name="Dyer D.W."/>
            <person name="Thune R.L."/>
            <person name="Waldbieser G.C."/>
            <person name="Schuster S.C."/>
            <person name="Gipson J."/>
            <person name="Zaitshik J."/>
            <person name="Landry C."/>
            <person name="Lawrence M.L."/>
        </authorList>
    </citation>
    <scope>NUCLEOTIDE SEQUENCE [LARGE SCALE GENOMIC DNA]</scope>
    <source>
        <strain>93-146</strain>
    </source>
</reference>
<proteinExistence type="inferred from homology"/>
<dbReference type="EC" id="3.6.1.41" evidence="1"/>
<dbReference type="EMBL" id="CP001600">
    <property type="protein sequence ID" value="ACR67916.1"/>
    <property type="molecule type" value="Genomic_DNA"/>
</dbReference>
<dbReference type="RefSeq" id="WP_015870109.1">
    <property type="nucleotide sequence ID" value="NZ_CP169062.1"/>
</dbReference>
<dbReference type="SMR" id="C5B7N9"/>
<dbReference type="STRING" id="67780.B6E78_14120"/>
<dbReference type="GeneID" id="69537759"/>
<dbReference type="KEGG" id="eic:NT01EI_0694"/>
<dbReference type="PATRIC" id="fig|634503.3.peg.625"/>
<dbReference type="HOGENOM" id="CLU_056184_2_0_6"/>
<dbReference type="OrthoDB" id="9807890at2"/>
<dbReference type="Proteomes" id="UP000001485">
    <property type="component" value="Chromosome"/>
</dbReference>
<dbReference type="GO" id="GO:0008803">
    <property type="term" value="F:bis(5'-nucleosyl)-tetraphosphatase (symmetrical) activity"/>
    <property type="evidence" value="ECO:0007669"/>
    <property type="project" value="UniProtKB-UniRule"/>
</dbReference>
<dbReference type="CDD" id="cd07422">
    <property type="entry name" value="MPP_ApaH"/>
    <property type="match status" value="1"/>
</dbReference>
<dbReference type="FunFam" id="3.60.21.10:FF:000013">
    <property type="entry name" value="Bis(5'-nucleosyl)-tetraphosphatase, symmetrical"/>
    <property type="match status" value="1"/>
</dbReference>
<dbReference type="Gene3D" id="3.60.21.10">
    <property type="match status" value="1"/>
</dbReference>
<dbReference type="HAMAP" id="MF_00199">
    <property type="entry name" value="ApaH"/>
    <property type="match status" value="1"/>
</dbReference>
<dbReference type="InterPro" id="IPR004617">
    <property type="entry name" value="ApaH"/>
</dbReference>
<dbReference type="InterPro" id="IPR004843">
    <property type="entry name" value="Calcineurin-like_PHP_ApaH"/>
</dbReference>
<dbReference type="InterPro" id="IPR029052">
    <property type="entry name" value="Metallo-depent_PP-like"/>
</dbReference>
<dbReference type="NCBIfam" id="TIGR00668">
    <property type="entry name" value="apaH"/>
    <property type="match status" value="1"/>
</dbReference>
<dbReference type="NCBIfam" id="NF001204">
    <property type="entry name" value="PRK00166.1"/>
    <property type="match status" value="1"/>
</dbReference>
<dbReference type="PANTHER" id="PTHR40942">
    <property type="match status" value="1"/>
</dbReference>
<dbReference type="PANTHER" id="PTHR40942:SF4">
    <property type="entry name" value="CYTOCHROME C5"/>
    <property type="match status" value="1"/>
</dbReference>
<dbReference type="Pfam" id="PF00149">
    <property type="entry name" value="Metallophos"/>
    <property type="match status" value="1"/>
</dbReference>
<dbReference type="PIRSF" id="PIRSF000903">
    <property type="entry name" value="B5n-ttraPtase_sm"/>
    <property type="match status" value="1"/>
</dbReference>
<dbReference type="SUPFAM" id="SSF56300">
    <property type="entry name" value="Metallo-dependent phosphatases"/>
    <property type="match status" value="1"/>
</dbReference>
<comment type="function">
    <text evidence="1">Hydrolyzes diadenosine 5',5'''-P1,P4-tetraphosphate to yield ADP.</text>
</comment>
<comment type="catalytic activity">
    <reaction evidence="1">
        <text>P(1),P(4)-bis(5'-adenosyl) tetraphosphate + H2O = 2 ADP + 2 H(+)</text>
        <dbReference type="Rhea" id="RHEA:24252"/>
        <dbReference type="ChEBI" id="CHEBI:15377"/>
        <dbReference type="ChEBI" id="CHEBI:15378"/>
        <dbReference type="ChEBI" id="CHEBI:58141"/>
        <dbReference type="ChEBI" id="CHEBI:456216"/>
        <dbReference type="EC" id="3.6.1.41"/>
    </reaction>
</comment>
<comment type="similarity">
    <text evidence="1">Belongs to the Ap4A hydrolase family.</text>
</comment>
<name>APAH_EDWI9</name>
<accession>C5B7N9</accession>
<evidence type="ECO:0000255" key="1">
    <source>
        <dbReference type="HAMAP-Rule" id="MF_00199"/>
    </source>
</evidence>
<gene>
    <name evidence="1" type="primary">apaH</name>
    <name type="ordered locus">NT01EI_0694</name>
</gene>
<sequence>MSTLLIGDVHGCYHELRDLLSLADFDPARDTLWLTGDLVARGPDSLAVLRYVKSLGDSARLVLGNHDLHLLAIYAGISRNKPKDKLTPLLEAPDADSLINWLRRQPVLQVDNDLCLVMAHAGISPQWDLTTAQRCAREVEAMLASDSYPFFLNAMYGDMPNNWSESLSGLARLRFTTNALTRMRYCFPGGELDMICKDAPEDAPAPLRPWFDLDSPVREAGYSIAFGHWASLEGRSTPPQVYALDTGCCWGGTLTALRWEDRHSFSVPSRRASRHAKAE</sequence>
<keyword id="KW-0378">Hydrolase</keyword>
<feature type="chain" id="PRO_1000204085" description="Bis(5'-nucleosyl)-tetraphosphatase, symmetrical">
    <location>
        <begin position="1"/>
        <end position="279"/>
    </location>
</feature>